<reference key="1">
    <citation type="journal article" date="2005" name="Nature">
        <title>The genome of the social amoeba Dictyostelium discoideum.</title>
        <authorList>
            <person name="Eichinger L."/>
            <person name="Pachebat J.A."/>
            <person name="Gloeckner G."/>
            <person name="Rajandream M.A."/>
            <person name="Sucgang R."/>
            <person name="Berriman M."/>
            <person name="Song J."/>
            <person name="Olsen R."/>
            <person name="Szafranski K."/>
            <person name="Xu Q."/>
            <person name="Tunggal B."/>
            <person name="Kummerfeld S."/>
            <person name="Madera M."/>
            <person name="Konfortov B.A."/>
            <person name="Rivero F."/>
            <person name="Bankier A.T."/>
            <person name="Lehmann R."/>
            <person name="Hamlin N."/>
            <person name="Davies R."/>
            <person name="Gaudet P."/>
            <person name="Fey P."/>
            <person name="Pilcher K."/>
            <person name="Chen G."/>
            <person name="Saunders D."/>
            <person name="Sodergren E.J."/>
            <person name="Davis P."/>
            <person name="Kerhornou A."/>
            <person name="Nie X."/>
            <person name="Hall N."/>
            <person name="Anjard C."/>
            <person name="Hemphill L."/>
            <person name="Bason N."/>
            <person name="Farbrother P."/>
            <person name="Desany B."/>
            <person name="Just E."/>
            <person name="Morio T."/>
            <person name="Rost R."/>
            <person name="Churcher C.M."/>
            <person name="Cooper J."/>
            <person name="Haydock S."/>
            <person name="van Driessche N."/>
            <person name="Cronin A."/>
            <person name="Goodhead I."/>
            <person name="Muzny D.M."/>
            <person name="Mourier T."/>
            <person name="Pain A."/>
            <person name="Lu M."/>
            <person name="Harper D."/>
            <person name="Lindsay R."/>
            <person name="Hauser H."/>
            <person name="James K.D."/>
            <person name="Quiles M."/>
            <person name="Madan Babu M."/>
            <person name="Saito T."/>
            <person name="Buchrieser C."/>
            <person name="Wardroper A."/>
            <person name="Felder M."/>
            <person name="Thangavelu M."/>
            <person name="Johnson D."/>
            <person name="Knights A."/>
            <person name="Loulseged H."/>
            <person name="Mungall K.L."/>
            <person name="Oliver K."/>
            <person name="Price C."/>
            <person name="Quail M.A."/>
            <person name="Urushihara H."/>
            <person name="Hernandez J."/>
            <person name="Rabbinowitsch E."/>
            <person name="Steffen D."/>
            <person name="Sanders M."/>
            <person name="Ma J."/>
            <person name="Kohara Y."/>
            <person name="Sharp S."/>
            <person name="Simmonds M.N."/>
            <person name="Spiegler S."/>
            <person name="Tivey A."/>
            <person name="Sugano S."/>
            <person name="White B."/>
            <person name="Walker D."/>
            <person name="Woodward J.R."/>
            <person name="Winckler T."/>
            <person name="Tanaka Y."/>
            <person name="Shaulsky G."/>
            <person name="Schleicher M."/>
            <person name="Weinstock G.M."/>
            <person name="Rosenthal A."/>
            <person name="Cox E.C."/>
            <person name="Chisholm R.L."/>
            <person name="Gibbs R.A."/>
            <person name="Loomis W.F."/>
            <person name="Platzer M."/>
            <person name="Kay R.R."/>
            <person name="Williams J.G."/>
            <person name="Dear P.H."/>
            <person name="Noegel A.A."/>
            <person name="Barrell B.G."/>
            <person name="Kuspa A."/>
        </authorList>
    </citation>
    <scope>NUCLEOTIDE SEQUENCE [LARGE SCALE GENOMIC DNA]</scope>
    <source>
        <strain>AX4</strain>
    </source>
</reference>
<proteinExistence type="inferred from homology"/>
<sequence length="99" mass="8948">MTLFSSISSISNPMTSSKSSISSFGSGTSMGSNTVACGGGCGGSGGILGLGLGLGLGLDLTGGSRSRGACGGNGGNRGNGNGGMGGGNGPCCGGCCCGI</sequence>
<accession>Q54UM7</accession>
<evidence type="ECO:0000256" key="1">
    <source>
        <dbReference type="SAM" id="MobiDB-lite"/>
    </source>
</evidence>
<evidence type="ECO:0000305" key="2"/>
<organism>
    <name type="scientific">Dictyostelium discoideum</name>
    <name type="common">Social amoeba</name>
    <dbReference type="NCBI Taxonomy" id="44689"/>
    <lineage>
        <taxon>Eukaryota</taxon>
        <taxon>Amoebozoa</taxon>
        <taxon>Evosea</taxon>
        <taxon>Eumycetozoa</taxon>
        <taxon>Dictyostelia</taxon>
        <taxon>Dictyosteliales</taxon>
        <taxon>Dictyosteliaceae</taxon>
        <taxon>Dictyostelium</taxon>
    </lineage>
</organism>
<comment type="similarity">
    <text evidence="2">Belongs to the hssA/B family.</text>
</comment>
<feature type="chain" id="PRO_0000330409" description="HssA/B-like protein 41">
    <location>
        <begin position="1"/>
        <end position="99"/>
    </location>
</feature>
<feature type="region of interest" description="Disordered" evidence="1">
    <location>
        <begin position="1"/>
        <end position="29"/>
    </location>
</feature>
<gene>
    <name type="primary">hssl41</name>
    <name type="ORF">DDB_G0280951</name>
</gene>
<keyword id="KW-1185">Reference proteome</keyword>
<dbReference type="EMBL" id="AAFI02000039">
    <property type="protein sequence ID" value="EAL67017.1"/>
    <property type="molecule type" value="Genomic_DNA"/>
</dbReference>
<dbReference type="RefSeq" id="XP_640994.1">
    <property type="nucleotide sequence ID" value="XM_635902.1"/>
</dbReference>
<dbReference type="PaxDb" id="44689-DDB0252789"/>
<dbReference type="EnsemblProtists" id="EAL67017">
    <property type="protein sequence ID" value="EAL67017"/>
    <property type="gene ID" value="DDB_G0280951"/>
</dbReference>
<dbReference type="GeneID" id="8622802"/>
<dbReference type="KEGG" id="ddi:DDB_G0280951"/>
<dbReference type="dictyBase" id="DDB_G0280951"/>
<dbReference type="HOGENOM" id="CLU_181850_0_0_1"/>
<dbReference type="InParanoid" id="Q54UM7"/>
<dbReference type="PRO" id="PR:Q54UM7"/>
<dbReference type="Proteomes" id="UP000002195">
    <property type="component" value="Chromosome 3"/>
</dbReference>
<dbReference type="GO" id="GO:0030587">
    <property type="term" value="P:sorocarp development"/>
    <property type="evidence" value="ECO:0000318"/>
    <property type="project" value="GO_Central"/>
</dbReference>
<dbReference type="InterPro" id="IPR050533">
    <property type="entry name" value="HssA/B-like_chaperone"/>
</dbReference>
<dbReference type="InterPro" id="IPR008455">
    <property type="entry name" value="HssA/B-related"/>
</dbReference>
<dbReference type="PANTHER" id="PTHR31059">
    <property type="entry name" value="HSSA/B-LIKE PROTEIN 1-RELATED-RELATED"/>
    <property type="match status" value="1"/>
</dbReference>
<dbReference type="PANTHER" id="PTHR31059:SF5">
    <property type="entry name" value="HSSA_B-LIKE PROTEIN 1-RELATED"/>
    <property type="match status" value="1"/>
</dbReference>
<dbReference type="Pfam" id="PF05710">
    <property type="entry name" value="Coiled"/>
    <property type="match status" value="1"/>
</dbReference>
<protein>
    <recommendedName>
        <fullName>HssA/B-like protein 41</fullName>
    </recommendedName>
</protein>
<name>HSL41_DICDI</name>